<reference key="1">
    <citation type="journal article" date="2008" name="J. Bacteriol.">
        <title>The pangenome structure of Escherichia coli: comparative genomic analysis of E. coli commensal and pathogenic isolates.</title>
        <authorList>
            <person name="Rasko D.A."/>
            <person name="Rosovitz M.J."/>
            <person name="Myers G.S.A."/>
            <person name="Mongodin E.F."/>
            <person name="Fricke W.F."/>
            <person name="Gajer P."/>
            <person name="Crabtree J."/>
            <person name="Sebaihia M."/>
            <person name="Thomson N.R."/>
            <person name="Chaudhuri R."/>
            <person name="Henderson I.R."/>
            <person name="Sperandio V."/>
            <person name="Ravel J."/>
        </authorList>
    </citation>
    <scope>NUCLEOTIDE SEQUENCE [LARGE SCALE GENOMIC DNA]</scope>
    <source>
        <strain>HS</strain>
    </source>
</reference>
<organism>
    <name type="scientific">Escherichia coli O9:H4 (strain HS)</name>
    <dbReference type="NCBI Taxonomy" id="331112"/>
    <lineage>
        <taxon>Bacteria</taxon>
        <taxon>Pseudomonadati</taxon>
        <taxon>Pseudomonadota</taxon>
        <taxon>Gammaproteobacteria</taxon>
        <taxon>Enterobacterales</taxon>
        <taxon>Enterobacteriaceae</taxon>
        <taxon>Escherichia</taxon>
    </lineage>
</organism>
<keyword id="KW-0255">Endonuclease</keyword>
<keyword id="KW-0378">Hydrolase</keyword>
<keyword id="KW-0540">Nuclease</keyword>
<keyword id="KW-0694">RNA-binding</keyword>
<keyword id="KW-0699">rRNA-binding</keyword>
<proteinExistence type="inferred from homology"/>
<feature type="chain" id="PRO_1000084347" description="Ribosome rescue factor SmrB">
    <location>
        <begin position="1"/>
        <end position="183"/>
    </location>
</feature>
<feature type="domain" description="Smr" evidence="1">
    <location>
        <begin position="98"/>
        <end position="173"/>
    </location>
</feature>
<comment type="function">
    <text evidence="1">Acts as a ribosome collision sensor. Detects stalled/collided disomes (pairs of ribosomes where the leading ribosome is stalled and a second ribosome has collided with it) and endonucleolytically cleaves mRNA at the 5' boundary of the stalled ribosome. Stalled/collided disomes form a new interface (primarily via the 30S subunits) that binds SmrB. Cleaved mRNA becomes available for tmRNA ligation, leading to ribosomal subunit dissociation and rescue of stalled ribosomes.</text>
</comment>
<comment type="subunit">
    <text evidence="1">Associates with collided ribosomes, but not with correctly translating polysomes.</text>
</comment>
<comment type="similarity">
    <text evidence="1">Belongs to the SmrB family.</text>
</comment>
<evidence type="ECO:0000255" key="1">
    <source>
        <dbReference type="HAMAP-Rule" id="MF_01042"/>
    </source>
</evidence>
<name>SMRB_ECOHS</name>
<protein>
    <recommendedName>
        <fullName evidence="1">Ribosome rescue factor SmrB</fullName>
        <ecNumber evidence="1">3.1.-.-</ecNumber>
    </recommendedName>
</protein>
<accession>A8A2K1</accession>
<gene>
    <name evidence="1" type="primary">smrB</name>
    <name type="ordered locus">EcHS_A2483</name>
</gene>
<sequence length="183" mass="21013">MKKKTTLSEEDQALFRQLMAGTRKIKQDTIVHRPQRKKISEVPVKRLIQEQADASHYFSDEFQPLLNTEGPVKYVRPDVSHFEAKKLRRGDYSPELFLDLHGLTQLQAKQELGALIAACRREHVFCACVMHGHGKHILKQQTPLWLAQHPHVMAFHQAPKEYGGDAALLVLIEVEEWLPPELP</sequence>
<dbReference type="EC" id="3.1.-.-" evidence="1"/>
<dbReference type="EMBL" id="CP000802">
    <property type="protein sequence ID" value="ABV06755.1"/>
    <property type="molecule type" value="Genomic_DNA"/>
</dbReference>
<dbReference type="RefSeq" id="WP_000730806.1">
    <property type="nucleotide sequence ID" value="NC_009800.1"/>
</dbReference>
<dbReference type="SMR" id="A8A2K1"/>
<dbReference type="GeneID" id="93774844"/>
<dbReference type="KEGG" id="ecx:EcHS_A2483"/>
<dbReference type="HOGENOM" id="CLU_055978_4_0_6"/>
<dbReference type="GO" id="GO:0004521">
    <property type="term" value="F:RNA endonuclease activity"/>
    <property type="evidence" value="ECO:0007669"/>
    <property type="project" value="UniProtKB-UniRule"/>
</dbReference>
<dbReference type="GO" id="GO:0019843">
    <property type="term" value="F:rRNA binding"/>
    <property type="evidence" value="ECO:0007669"/>
    <property type="project" value="UniProtKB-UniRule"/>
</dbReference>
<dbReference type="GO" id="GO:0072344">
    <property type="term" value="P:rescue of stalled ribosome"/>
    <property type="evidence" value="ECO:0007669"/>
    <property type="project" value="UniProtKB-UniRule"/>
</dbReference>
<dbReference type="Gene3D" id="3.30.1370.110">
    <property type="match status" value="1"/>
</dbReference>
<dbReference type="HAMAP" id="MF_01042">
    <property type="entry name" value="SmrB"/>
    <property type="match status" value="1"/>
</dbReference>
<dbReference type="InterPro" id="IPR002625">
    <property type="entry name" value="Smr_dom"/>
</dbReference>
<dbReference type="InterPro" id="IPR036063">
    <property type="entry name" value="Smr_dom_sf"/>
</dbReference>
<dbReference type="InterPro" id="IPR022990">
    <property type="entry name" value="SmrB-like"/>
</dbReference>
<dbReference type="NCBIfam" id="NF003432">
    <property type="entry name" value="PRK04946.1"/>
    <property type="match status" value="1"/>
</dbReference>
<dbReference type="PANTHER" id="PTHR35562">
    <property type="entry name" value="DNA ENDONUCLEASE SMRA-RELATED"/>
    <property type="match status" value="1"/>
</dbReference>
<dbReference type="PANTHER" id="PTHR35562:SF1">
    <property type="entry name" value="UPF0115 PROTEIN YFCN"/>
    <property type="match status" value="1"/>
</dbReference>
<dbReference type="Pfam" id="PF01713">
    <property type="entry name" value="Smr"/>
    <property type="match status" value="1"/>
</dbReference>
<dbReference type="SMART" id="SM00463">
    <property type="entry name" value="SMR"/>
    <property type="match status" value="1"/>
</dbReference>
<dbReference type="SUPFAM" id="SSF160443">
    <property type="entry name" value="SMR domain-like"/>
    <property type="match status" value="1"/>
</dbReference>
<dbReference type="PROSITE" id="PS50828">
    <property type="entry name" value="SMR"/>
    <property type="match status" value="1"/>
</dbReference>